<gene>
    <name evidence="1" type="primary">clpS</name>
    <name type="ordered locus">LBJ_1906</name>
</gene>
<name>CLPS_LEPBJ</name>
<dbReference type="EMBL" id="CP000350">
    <property type="protein sequence ID" value="ABJ76426.1"/>
    <property type="molecule type" value="Genomic_DNA"/>
</dbReference>
<dbReference type="RefSeq" id="WP_011670079.1">
    <property type="nucleotide sequence ID" value="NC_008510.1"/>
</dbReference>
<dbReference type="SMR" id="Q04RP4"/>
<dbReference type="KEGG" id="lbj:LBJ_1906"/>
<dbReference type="HOGENOM" id="CLU_134358_1_0_12"/>
<dbReference type="Proteomes" id="UP000000656">
    <property type="component" value="Chromosome 1"/>
</dbReference>
<dbReference type="GO" id="GO:0030163">
    <property type="term" value="P:protein catabolic process"/>
    <property type="evidence" value="ECO:0007669"/>
    <property type="project" value="InterPro"/>
</dbReference>
<dbReference type="GO" id="GO:0006508">
    <property type="term" value="P:proteolysis"/>
    <property type="evidence" value="ECO:0007669"/>
    <property type="project" value="UniProtKB-UniRule"/>
</dbReference>
<dbReference type="FunFam" id="3.30.1390.10:FF:000002">
    <property type="entry name" value="ATP-dependent Clp protease adapter protein ClpS"/>
    <property type="match status" value="1"/>
</dbReference>
<dbReference type="Gene3D" id="3.30.1390.10">
    <property type="match status" value="1"/>
</dbReference>
<dbReference type="HAMAP" id="MF_00302">
    <property type="entry name" value="ClpS"/>
    <property type="match status" value="1"/>
</dbReference>
<dbReference type="InterPro" id="IPR022935">
    <property type="entry name" value="ClpS"/>
</dbReference>
<dbReference type="InterPro" id="IPR003769">
    <property type="entry name" value="ClpS_core"/>
</dbReference>
<dbReference type="InterPro" id="IPR014719">
    <property type="entry name" value="Ribosomal_bL12_C/ClpS-like"/>
</dbReference>
<dbReference type="NCBIfam" id="NF000672">
    <property type="entry name" value="PRK00033.1-5"/>
    <property type="match status" value="1"/>
</dbReference>
<dbReference type="PANTHER" id="PTHR33473:SF19">
    <property type="entry name" value="ATP-DEPENDENT CLP PROTEASE ADAPTER PROTEIN CLPS"/>
    <property type="match status" value="1"/>
</dbReference>
<dbReference type="PANTHER" id="PTHR33473">
    <property type="entry name" value="ATP-DEPENDENT CLP PROTEASE ADAPTER PROTEIN CLPS1, CHLOROPLASTIC"/>
    <property type="match status" value="1"/>
</dbReference>
<dbReference type="Pfam" id="PF02617">
    <property type="entry name" value="ClpS"/>
    <property type="match status" value="1"/>
</dbReference>
<dbReference type="SUPFAM" id="SSF54736">
    <property type="entry name" value="ClpS-like"/>
    <property type="match status" value="1"/>
</dbReference>
<reference key="1">
    <citation type="journal article" date="2006" name="Proc. Natl. Acad. Sci. U.S.A.">
        <title>Genome reduction in Leptospira borgpetersenii reflects limited transmission potential.</title>
        <authorList>
            <person name="Bulach D.M."/>
            <person name="Zuerner R.L."/>
            <person name="Wilson P."/>
            <person name="Seemann T."/>
            <person name="McGrath A."/>
            <person name="Cullen P.A."/>
            <person name="Davis J."/>
            <person name="Johnson M."/>
            <person name="Kuczek E."/>
            <person name="Alt D.P."/>
            <person name="Peterson-Burch B."/>
            <person name="Coppel R.L."/>
            <person name="Rood J.I."/>
            <person name="Davies J.K."/>
            <person name="Adler B."/>
        </authorList>
    </citation>
    <scope>NUCLEOTIDE SEQUENCE [LARGE SCALE GENOMIC DNA]</scope>
    <source>
        <strain>JB197</strain>
    </source>
</reference>
<comment type="function">
    <text evidence="1">Involved in the modulation of the specificity of the ClpAP-mediated ATP-dependent protein degradation.</text>
</comment>
<comment type="subunit">
    <text evidence="1">Binds to the N-terminal domain of the chaperone ClpA.</text>
</comment>
<comment type="similarity">
    <text evidence="1">Belongs to the ClpS family.</text>
</comment>
<proteinExistence type="inferred from homology"/>
<protein>
    <recommendedName>
        <fullName evidence="1">ATP-dependent Clp protease adapter protein ClpS</fullName>
    </recommendedName>
</protein>
<evidence type="ECO:0000255" key="1">
    <source>
        <dbReference type="HAMAP-Rule" id="MF_00302"/>
    </source>
</evidence>
<feature type="chain" id="PRO_0000300708" description="ATP-dependent Clp protease adapter protein ClpS">
    <location>
        <begin position="1"/>
        <end position="108"/>
    </location>
</feature>
<organism>
    <name type="scientific">Leptospira borgpetersenii serovar Hardjo-bovis (strain JB197)</name>
    <dbReference type="NCBI Taxonomy" id="355277"/>
    <lineage>
        <taxon>Bacteria</taxon>
        <taxon>Pseudomonadati</taxon>
        <taxon>Spirochaetota</taxon>
        <taxon>Spirochaetia</taxon>
        <taxon>Leptospirales</taxon>
        <taxon>Leptospiraceae</taxon>
        <taxon>Leptospira</taxon>
    </lineage>
</organism>
<accession>Q04RP4</accession>
<sequence length="108" mass="12698">MSDIFRFDTEEQTLTKEKVKLKRPSKYRVIILNDDFTPMEFVVWILQFVFHRSRAQSQQIMLKAHITGKALCGVYSHDVARTKVIQVQQLAEQHGYPLHCTMEVEEES</sequence>